<keyword id="KW-0030">Aminoacyl-tRNA synthetase</keyword>
<keyword id="KW-0067">ATP-binding</keyword>
<keyword id="KW-0963">Cytoplasm</keyword>
<keyword id="KW-0436">Ligase</keyword>
<keyword id="KW-0479">Metal-binding</keyword>
<keyword id="KW-0547">Nucleotide-binding</keyword>
<keyword id="KW-0648">Protein biosynthesis</keyword>
<keyword id="KW-1185">Reference proteome</keyword>
<keyword id="KW-0862">Zinc</keyword>
<protein>
    <recommendedName>
        <fullName evidence="1">Isoleucine--tRNA ligase</fullName>
        <ecNumber evidence="1">6.1.1.5</ecNumber>
    </recommendedName>
    <alternativeName>
        <fullName evidence="1">Isoleucyl-tRNA synthetase</fullName>
        <shortName evidence="1">IleRS</shortName>
    </alternativeName>
</protein>
<accession>Q8TWY2</accession>
<gene>
    <name evidence="1" type="primary">ileS</name>
    <name type="ordered locus">MK0899</name>
</gene>
<name>SYI_METKA</name>
<organism>
    <name type="scientific">Methanopyrus kandleri (strain AV19 / DSM 6324 / JCM 9639 / NBRC 100938)</name>
    <dbReference type="NCBI Taxonomy" id="190192"/>
    <lineage>
        <taxon>Archaea</taxon>
        <taxon>Methanobacteriati</taxon>
        <taxon>Methanobacteriota</taxon>
        <taxon>Methanomada group</taxon>
        <taxon>Methanopyri</taxon>
        <taxon>Methanopyrales</taxon>
        <taxon>Methanopyraceae</taxon>
        <taxon>Methanopyrus</taxon>
    </lineage>
</organism>
<dbReference type="EC" id="6.1.1.5" evidence="1"/>
<dbReference type="EMBL" id="AE009439">
    <property type="protein sequence ID" value="AAM02112.1"/>
    <property type="molecule type" value="Genomic_DNA"/>
</dbReference>
<dbReference type="SMR" id="Q8TWY2"/>
<dbReference type="FunCoup" id="Q8TWY2">
    <property type="interactions" value="209"/>
</dbReference>
<dbReference type="STRING" id="190192.MK0899"/>
<dbReference type="PaxDb" id="190192-MK0899"/>
<dbReference type="EnsemblBacteria" id="AAM02112">
    <property type="protein sequence ID" value="AAM02112"/>
    <property type="gene ID" value="MK0899"/>
</dbReference>
<dbReference type="KEGG" id="mka:MK0899"/>
<dbReference type="PATRIC" id="fig|190192.8.peg.941"/>
<dbReference type="HOGENOM" id="CLU_001493_1_1_2"/>
<dbReference type="InParanoid" id="Q8TWY2"/>
<dbReference type="OrthoDB" id="30823at2157"/>
<dbReference type="Proteomes" id="UP000001826">
    <property type="component" value="Chromosome"/>
</dbReference>
<dbReference type="GO" id="GO:0005829">
    <property type="term" value="C:cytosol"/>
    <property type="evidence" value="ECO:0007669"/>
    <property type="project" value="TreeGrafter"/>
</dbReference>
<dbReference type="GO" id="GO:0002161">
    <property type="term" value="F:aminoacyl-tRNA deacylase activity"/>
    <property type="evidence" value="ECO:0007669"/>
    <property type="project" value="InterPro"/>
</dbReference>
<dbReference type="GO" id="GO:0005524">
    <property type="term" value="F:ATP binding"/>
    <property type="evidence" value="ECO:0007669"/>
    <property type="project" value="UniProtKB-UniRule"/>
</dbReference>
<dbReference type="GO" id="GO:0004822">
    <property type="term" value="F:isoleucine-tRNA ligase activity"/>
    <property type="evidence" value="ECO:0007669"/>
    <property type="project" value="UniProtKB-UniRule"/>
</dbReference>
<dbReference type="GO" id="GO:0000049">
    <property type="term" value="F:tRNA binding"/>
    <property type="evidence" value="ECO:0007669"/>
    <property type="project" value="InterPro"/>
</dbReference>
<dbReference type="GO" id="GO:0008270">
    <property type="term" value="F:zinc ion binding"/>
    <property type="evidence" value="ECO:0007669"/>
    <property type="project" value="UniProtKB-UniRule"/>
</dbReference>
<dbReference type="GO" id="GO:0006428">
    <property type="term" value="P:isoleucyl-tRNA aminoacylation"/>
    <property type="evidence" value="ECO:0007669"/>
    <property type="project" value="UniProtKB-UniRule"/>
</dbReference>
<dbReference type="CDD" id="cd07961">
    <property type="entry name" value="Anticodon_Ia_Ile_ABEc"/>
    <property type="match status" value="1"/>
</dbReference>
<dbReference type="CDD" id="cd00818">
    <property type="entry name" value="IleRS_core"/>
    <property type="match status" value="1"/>
</dbReference>
<dbReference type="FunFam" id="3.40.50.620:FF:000286">
    <property type="entry name" value="Isoleucine--tRNA ligase"/>
    <property type="match status" value="1"/>
</dbReference>
<dbReference type="FunFam" id="1.10.730.10:FF:000033">
    <property type="entry name" value="Valine--tRNA ligase"/>
    <property type="match status" value="1"/>
</dbReference>
<dbReference type="Gene3D" id="3.40.50.620">
    <property type="entry name" value="HUPs"/>
    <property type="match status" value="2"/>
</dbReference>
<dbReference type="Gene3D" id="1.10.730.10">
    <property type="entry name" value="Isoleucyl-tRNA Synthetase, Domain 1"/>
    <property type="match status" value="1"/>
</dbReference>
<dbReference type="HAMAP" id="MF_02003">
    <property type="entry name" value="Ile_tRNA_synth_type2"/>
    <property type="match status" value="1"/>
</dbReference>
<dbReference type="InterPro" id="IPR001412">
    <property type="entry name" value="aa-tRNA-synth_I_CS"/>
</dbReference>
<dbReference type="InterPro" id="IPR002300">
    <property type="entry name" value="aa-tRNA-synth_Ia"/>
</dbReference>
<dbReference type="InterPro" id="IPR033709">
    <property type="entry name" value="Anticodon_Ile_ABEc"/>
</dbReference>
<dbReference type="InterPro" id="IPR002301">
    <property type="entry name" value="Ile-tRNA-ligase"/>
</dbReference>
<dbReference type="InterPro" id="IPR023586">
    <property type="entry name" value="Ile-tRNA-ligase_type2"/>
</dbReference>
<dbReference type="InterPro" id="IPR050081">
    <property type="entry name" value="Ile-tRNA_ligase"/>
</dbReference>
<dbReference type="InterPro" id="IPR013155">
    <property type="entry name" value="M/V/L/I-tRNA-synth_anticd-bd"/>
</dbReference>
<dbReference type="InterPro" id="IPR014729">
    <property type="entry name" value="Rossmann-like_a/b/a_fold"/>
</dbReference>
<dbReference type="InterPro" id="IPR009080">
    <property type="entry name" value="tRNAsynth_Ia_anticodon-bd"/>
</dbReference>
<dbReference type="InterPro" id="IPR009008">
    <property type="entry name" value="Val/Leu/Ile-tRNA-synth_edit"/>
</dbReference>
<dbReference type="NCBIfam" id="TIGR00392">
    <property type="entry name" value="ileS"/>
    <property type="match status" value="1"/>
</dbReference>
<dbReference type="PANTHER" id="PTHR42765:SF1">
    <property type="entry name" value="ISOLEUCINE--TRNA LIGASE, MITOCHONDRIAL"/>
    <property type="match status" value="1"/>
</dbReference>
<dbReference type="PANTHER" id="PTHR42765">
    <property type="entry name" value="SOLEUCYL-TRNA SYNTHETASE"/>
    <property type="match status" value="1"/>
</dbReference>
<dbReference type="Pfam" id="PF08264">
    <property type="entry name" value="Anticodon_1"/>
    <property type="match status" value="1"/>
</dbReference>
<dbReference type="Pfam" id="PF19302">
    <property type="entry name" value="DUF5915"/>
    <property type="match status" value="1"/>
</dbReference>
<dbReference type="Pfam" id="PF00133">
    <property type="entry name" value="tRNA-synt_1"/>
    <property type="match status" value="1"/>
</dbReference>
<dbReference type="PRINTS" id="PR00984">
    <property type="entry name" value="TRNASYNTHILE"/>
</dbReference>
<dbReference type="SUPFAM" id="SSF47323">
    <property type="entry name" value="Anticodon-binding domain of a subclass of class I aminoacyl-tRNA synthetases"/>
    <property type="match status" value="2"/>
</dbReference>
<dbReference type="SUPFAM" id="SSF52374">
    <property type="entry name" value="Nucleotidylyl transferase"/>
    <property type="match status" value="1"/>
</dbReference>
<dbReference type="SUPFAM" id="SSF50677">
    <property type="entry name" value="ValRS/IleRS/LeuRS editing domain"/>
    <property type="match status" value="1"/>
</dbReference>
<dbReference type="PROSITE" id="PS00178">
    <property type="entry name" value="AA_TRNA_LIGASE_I"/>
    <property type="match status" value="1"/>
</dbReference>
<proteinExistence type="inferred from homology"/>
<evidence type="ECO:0000255" key="1">
    <source>
        <dbReference type="HAMAP-Rule" id="MF_02003"/>
    </source>
</evidence>
<comment type="function">
    <text evidence="1">Catalyzes the attachment of isoleucine to tRNA(Ile). As IleRS can inadvertently accommodate and process structurally similar amino acids such as valine, to avoid such errors it has two additional distinct tRNA(Ile)-dependent editing activities. One activity is designated as 'pretransfer' editing and involves the hydrolysis of activated Val-AMP. The other activity is designated 'posttransfer' editing and involves deacylation of mischarged Val-tRNA(Ile).</text>
</comment>
<comment type="catalytic activity">
    <reaction evidence="1">
        <text>tRNA(Ile) + L-isoleucine + ATP = L-isoleucyl-tRNA(Ile) + AMP + diphosphate</text>
        <dbReference type="Rhea" id="RHEA:11060"/>
        <dbReference type="Rhea" id="RHEA-COMP:9666"/>
        <dbReference type="Rhea" id="RHEA-COMP:9695"/>
        <dbReference type="ChEBI" id="CHEBI:30616"/>
        <dbReference type="ChEBI" id="CHEBI:33019"/>
        <dbReference type="ChEBI" id="CHEBI:58045"/>
        <dbReference type="ChEBI" id="CHEBI:78442"/>
        <dbReference type="ChEBI" id="CHEBI:78528"/>
        <dbReference type="ChEBI" id="CHEBI:456215"/>
        <dbReference type="EC" id="6.1.1.5"/>
    </reaction>
</comment>
<comment type="cofactor">
    <cofactor evidence="1">
        <name>Zn(2+)</name>
        <dbReference type="ChEBI" id="CHEBI:29105"/>
    </cofactor>
</comment>
<comment type="subunit">
    <text evidence="1">Monomer.</text>
</comment>
<comment type="subcellular location">
    <subcellularLocation>
        <location evidence="1">Cytoplasm</location>
    </subcellularLocation>
</comment>
<comment type="domain">
    <text evidence="1">IleRS has two distinct active sites: one for aminoacylation and one for editing. The misactivated valine is translocated from the active site to the editing site, which sterically excludes the correctly activated isoleucine. The single editing site contains two valyl binding pockets, one specific for each substrate (Val-AMP or Val-tRNA(Ile)).</text>
</comment>
<comment type="similarity">
    <text evidence="1">Belongs to the class-I aminoacyl-tRNA synthetase family. IleS type 2 subfamily.</text>
</comment>
<sequence length="1080" mass="126028">MGAGEMAEALGEELEREIQRRWEEMDLLSKVLEKNRDGPLFYFLDGPPYASGSIHLGTAWNKIIKDAVNRYKLMRGYRVRLQPGWDCHGLPIEVKVEQEVLSDEIECKKDIEEKVGVDKFVEKCKEFALKHVEIMTEQFKRLGVLMDWDNPYMTLDNEYIEGAWYTLKRAHERGLLDRDVRIVNWCPRCETALADHEVEYKEVEDPSIFVIFPIEDDSDAEVDLPENSALLIWTTTPWTLPANLAVAVHPEEEYVLARAEVDGEEWHLIVADKLKVVLSVVTDSYEIVDSFPGEALEGLRYRPPLWEEVPKLRELHEEDDRVHRVYTAEWVTMEEGTGCVHSAPGHGEEDFELGREVGLPPHCPVAEDGTFTEDGGKYEGLYVRDANEKIVEDLREKGLLAHEDTVEHRYGHCWRCKTPIIYRATEQWFLKVTEVKDEMLEWIERVEWIPEWAGHSRFKSWVENARDWCISRQRYWGIPLPVWECEECGHLEVIGSLSELEAKAVSLPPGEPDLHRPWVDEVVLKCPECGSYMRRVPDVLDVWVDSGVAAWASLGYPRREDEFERWFLKEGRCDPDDPEAGADFITEGHDQTRGWFYSQLGCGVVTFDTCPYRTVLMHGFTLDEEGRKMSKSLGNVVDPMDVVEKYGADTLRWYVLRSNAPWRDMHFSWQDVRDTHRALNVLWNAYRFTKMYSELDEFDPEEHPLEDLEEHLKPEDRWLLSRINSLVEEVTDAFERYHVHEAARALYRFVTEDLSRWYIRLVRERVWLEGDDPEKLAVYAVLHYTFDRLVRLLAPIVPHVAERIYLDYVRAGDDPESVHLTDWPEVDDRWVDEGLEKAMELVRKAAEAALSVRQRAGVKTRWPLRRLFVEVEDPKRLEDLKDVLARVANVKEVELGEEFPEKVPVAEPRPDKIGPEFRSLAGRVIEHVKDRAEEVARSILKDGEYRTELDGEDVVLTEEHVKVTEDLPEGWEAEEFEGGRVYVFVELDEELKSEAWAREVVRRVQEMRKELDLNLEERIRVWIETDEEIAEAVEEHSEYVRGETRADELHVNEGWPEEVDLEREWEVEDRTIRIAVVVSG</sequence>
<feature type="chain" id="PRO_0000098582" description="Isoleucine--tRNA ligase">
    <location>
        <begin position="1"/>
        <end position="1080"/>
    </location>
</feature>
<feature type="short sequence motif" description="'HIGH' region">
    <location>
        <begin position="48"/>
        <end position="58"/>
    </location>
</feature>
<feature type="short sequence motif" description="'KMSKS' region">
    <location>
        <begin position="628"/>
        <end position="632"/>
    </location>
</feature>
<feature type="binding site" evidence="1">
    <location>
        <position position="631"/>
    </location>
    <ligand>
        <name>ATP</name>
        <dbReference type="ChEBI" id="CHEBI:30616"/>
    </ligand>
</feature>
<reference key="1">
    <citation type="journal article" date="2002" name="Proc. Natl. Acad. Sci. U.S.A.">
        <title>The complete genome of hyperthermophile Methanopyrus kandleri AV19 and monophyly of archaeal methanogens.</title>
        <authorList>
            <person name="Slesarev A.I."/>
            <person name="Mezhevaya K.V."/>
            <person name="Makarova K.S."/>
            <person name="Polushin N.N."/>
            <person name="Shcherbinina O.V."/>
            <person name="Shakhova V.V."/>
            <person name="Belova G.I."/>
            <person name="Aravind L."/>
            <person name="Natale D.A."/>
            <person name="Rogozin I.B."/>
            <person name="Tatusov R.L."/>
            <person name="Wolf Y.I."/>
            <person name="Stetter K.O."/>
            <person name="Malykh A.G."/>
            <person name="Koonin E.V."/>
            <person name="Kozyavkin S.A."/>
        </authorList>
    </citation>
    <scope>NUCLEOTIDE SEQUENCE [LARGE SCALE GENOMIC DNA]</scope>
    <source>
        <strain>AV19 / DSM 6324 / JCM 9639 / NBRC 100938</strain>
    </source>
</reference>